<reference key="1">
    <citation type="journal article" date="2007" name="Toxicon">
        <title>Omega-Lsp-IA, a novel modulator of P-type Ca(2+) channels.</title>
        <authorList>
            <person name="Pluzhnikov K.A."/>
            <person name="Vassilevski A."/>
            <person name="Korolkova Y."/>
            <person name="Fisyunov A."/>
            <person name="Iegorova O."/>
            <person name="Krishtal O."/>
            <person name="Grishin E."/>
        </authorList>
    </citation>
    <scope>NUCLEOTIDE SEQUENCE [MRNA]</scope>
    <source>
        <tissue>Venom gland</tissue>
    </source>
</reference>
<accession>A9XDG4</accession>
<keyword id="KW-0108">Calcium channel impairing toxin</keyword>
<keyword id="KW-1015">Disulfide bond</keyword>
<keyword id="KW-0872">Ion channel impairing toxin</keyword>
<keyword id="KW-0960">Knottin</keyword>
<keyword id="KW-0528">Neurotoxin</keyword>
<keyword id="KW-0964">Secreted</keyword>
<keyword id="KW-0800">Toxin</keyword>
<keyword id="KW-1218">Voltage-gated calcium channel impairing toxin</keyword>
<protein>
    <recommendedName>
        <fullName evidence="6">Omega-lycotoxin-Am1f</fullName>
        <shortName evidence="6">Omega-LCTX-Am1f</shortName>
    </recommendedName>
    <alternativeName>
        <fullName evidence="5 6">Omega-Lsp-IA-like 5</fullName>
    </alternativeName>
    <alternativeName>
        <fullName evidence="6">Omega-lycotoxin-Gsp(267)1f</fullName>
        <shortName evidence="6">Omega-LCTX-Gsp(267)1f</shortName>
    </alternativeName>
</protein>
<proteinExistence type="evidence at transcript level"/>
<organism>
    <name type="scientific">Alopecosa marikovskyi</name>
    <name type="common">Wolf spider</name>
    <name type="synonym">Lycosa kazakhstanicus</name>
    <dbReference type="NCBI Taxonomy" id="2066572"/>
    <lineage>
        <taxon>Eukaryota</taxon>
        <taxon>Metazoa</taxon>
        <taxon>Ecdysozoa</taxon>
        <taxon>Arthropoda</taxon>
        <taxon>Chelicerata</taxon>
        <taxon>Arachnida</taxon>
        <taxon>Araneae</taxon>
        <taxon>Araneomorphae</taxon>
        <taxon>Entelegynae</taxon>
        <taxon>Lycosoidea</taxon>
        <taxon>Lycosidae</taxon>
        <taxon>Alopecosa</taxon>
    </lineage>
</organism>
<comment type="function">
    <text evidence="3 4">Modulates Cav2.1/CACNA1A voltage-gated calcium channels (P/Q-type currents) in rat cerebellar Purkinje cells and hippocampal CA1-CA3 neurons (By similarity). At saturating concentrations (&gt;10 nM) decelerates activation kinetics and slightly increases peak amplitude without affecting deactivation kinetics (By similarity). In vivo, does not cause death when intravenously injected into mice (By similarity). In rat models, through its activity on Cav2.1/CACNA1A, has an ameliorative effect on memory defects provoked by hyperstimulation of N-methyl-D-aspartate receptors (NMDARs) in the hippocampus (By similarity).</text>
</comment>
<comment type="subcellular location">
    <subcellularLocation>
        <location evidence="7">Secreted</location>
    </subcellularLocation>
</comment>
<comment type="tissue specificity">
    <text evidence="7">Expressed by the venom gland.</text>
</comment>
<comment type="domain">
    <text evidence="6">The presence of a 'disulfide through disulfide knot' structurally defines this protein as a knottin.</text>
</comment>
<comment type="miscellaneous">
    <text evidence="6">According to the nomenclature proposed by King and colleagues (2008), 'Gsp(267)' comes from the species name 'Geolycosa sp (strain A267TDLS2-KZARNA)' (PubMed:17888477). This species has been reclassified since that study, as indicated in the work of Oparin and colleagues (2016) (PMID:27412961).</text>
</comment>
<comment type="similarity">
    <text evidence="6">Belongs to the neurotoxin omega-lctx family.</text>
</comment>
<evidence type="ECO:0000250" key="1"/>
<evidence type="ECO:0000250" key="2">
    <source>
        <dbReference type="UniProtKB" id="A0A0G3F8Z3"/>
    </source>
</evidence>
<evidence type="ECO:0000250" key="3">
    <source>
        <dbReference type="UniProtKB" id="P0DRA9"/>
    </source>
</evidence>
<evidence type="ECO:0000250" key="4">
    <source>
        <dbReference type="UniProtKB" id="P85079"/>
    </source>
</evidence>
<evidence type="ECO:0000303" key="5">
    <source>
    </source>
</evidence>
<evidence type="ECO:0000305" key="6"/>
<evidence type="ECO:0000305" key="7">
    <source>
    </source>
</evidence>
<dbReference type="EMBL" id="EF187336">
    <property type="protein sequence ID" value="ABP68830.1"/>
    <property type="molecule type" value="mRNA"/>
</dbReference>
<dbReference type="ArachnoServer" id="AS000508">
    <property type="toxin name" value="omega-lycotoxin-Gsp2671f"/>
</dbReference>
<dbReference type="GO" id="GO:0005576">
    <property type="term" value="C:extracellular region"/>
    <property type="evidence" value="ECO:0007669"/>
    <property type="project" value="UniProtKB-SubCell"/>
</dbReference>
<dbReference type="GO" id="GO:0005246">
    <property type="term" value="F:calcium channel regulator activity"/>
    <property type="evidence" value="ECO:0007669"/>
    <property type="project" value="UniProtKB-KW"/>
</dbReference>
<dbReference type="GO" id="GO:0090729">
    <property type="term" value="F:toxin activity"/>
    <property type="evidence" value="ECO:0007669"/>
    <property type="project" value="UniProtKB-KW"/>
</dbReference>
<name>TLCOF_ALOMR</name>
<feature type="propeptide" id="PRO_0000388743" evidence="1">
    <location>
        <begin position="1" status="less than"/>
        <end position="18"/>
    </location>
</feature>
<feature type="chain" id="PRO_0000388744" description="Omega-lycotoxin-Am1f">
    <location>
        <begin position="19"/>
        <end position="65"/>
    </location>
</feature>
<feature type="disulfide bond" evidence="2">
    <location>
        <begin position="22"/>
        <end position="37"/>
    </location>
</feature>
<feature type="disulfide bond" evidence="2">
    <location>
        <begin position="29"/>
        <end position="42"/>
    </location>
</feature>
<feature type="disulfide bond" evidence="2">
    <location>
        <begin position="36"/>
        <end position="62"/>
    </location>
</feature>
<feature type="disulfide bond" evidence="2">
    <location>
        <begin position="44"/>
        <end position="60"/>
    </location>
</feature>
<feature type="non-terminal residue">
    <location>
        <position position="1"/>
    </location>
</feature>
<sequence>GDEEDEVEETLPVAEEGREKSCTTWRNSCMHNDKGCCFPWSCVCWSQTVSRNSSRKEKKCQCRLW</sequence>